<sequence>MDLEVIAQLTVLTLMVVSGPLVIVLSAIRKGNL</sequence>
<keyword id="KW-0150">Chloroplast</keyword>
<keyword id="KW-0472">Membrane</keyword>
<keyword id="KW-0602">Photosynthesis</keyword>
<keyword id="KW-0604">Photosystem II</keyword>
<keyword id="KW-0934">Plastid</keyword>
<keyword id="KW-0793">Thylakoid</keyword>
<keyword id="KW-0812">Transmembrane</keyword>
<keyword id="KW-1133">Transmembrane helix</keyword>
<organism>
    <name type="scientific">Pinus koraiensis</name>
    <name type="common">Korean pine</name>
    <dbReference type="NCBI Taxonomy" id="88728"/>
    <lineage>
        <taxon>Eukaryota</taxon>
        <taxon>Viridiplantae</taxon>
        <taxon>Streptophyta</taxon>
        <taxon>Embryophyta</taxon>
        <taxon>Tracheophyta</taxon>
        <taxon>Spermatophyta</taxon>
        <taxon>Pinopsida</taxon>
        <taxon>Pinidae</taxon>
        <taxon>Conifers I</taxon>
        <taxon>Pinales</taxon>
        <taxon>Pinaceae</taxon>
        <taxon>Pinus</taxon>
        <taxon>Pinus subgen. Strobus</taxon>
    </lineage>
</organism>
<accession>A4QM02</accession>
<dbReference type="EMBL" id="AY228468">
    <property type="protein sequence ID" value="ABP35313.1"/>
    <property type="molecule type" value="Genomic_DNA"/>
</dbReference>
<dbReference type="RefSeq" id="YP_001152067.1">
    <property type="nucleotide sequence ID" value="NC_004677.2"/>
</dbReference>
<dbReference type="SMR" id="A4QM02"/>
<dbReference type="GeneID" id="5048469"/>
<dbReference type="GO" id="GO:0009535">
    <property type="term" value="C:chloroplast thylakoid membrane"/>
    <property type="evidence" value="ECO:0007669"/>
    <property type="project" value="UniProtKB-SubCell"/>
</dbReference>
<dbReference type="GO" id="GO:0009523">
    <property type="term" value="C:photosystem II"/>
    <property type="evidence" value="ECO:0007669"/>
    <property type="project" value="UniProtKB-KW"/>
</dbReference>
<dbReference type="GO" id="GO:0015979">
    <property type="term" value="P:photosynthesis"/>
    <property type="evidence" value="ECO:0007669"/>
    <property type="project" value="UniProtKB-KW"/>
</dbReference>
<dbReference type="HAMAP" id="MF_01329">
    <property type="entry name" value="PSII_Psb30_Ycf12"/>
    <property type="match status" value="1"/>
</dbReference>
<dbReference type="InterPro" id="IPR010284">
    <property type="entry name" value="PSII_Ycf12_core-subunit"/>
</dbReference>
<dbReference type="NCBIfam" id="NF010239">
    <property type="entry name" value="PRK13686.1"/>
    <property type="match status" value="1"/>
</dbReference>
<dbReference type="Pfam" id="PF05969">
    <property type="entry name" value="PSII_Ycf12"/>
    <property type="match status" value="1"/>
</dbReference>
<proteinExistence type="inferred from homology"/>
<geneLocation type="chloroplast"/>
<reference key="1">
    <citation type="submission" date="2003-02" db="EMBL/GenBank/DDBJ databases">
        <title>Complete nucleotide sequence of Pinus koraiensis.</title>
        <authorList>
            <person name="Noh E.W."/>
            <person name="Lee J.S."/>
            <person name="Choi Y.I."/>
            <person name="Han M.S."/>
            <person name="Yi Y.S."/>
            <person name="Han S.U."/>
        </authorList>
    </citation>
    <scope>NUCLEOTIDE SEQUENCE [LARGE SCALE GENOMIC DNA]</scope>
    <source>
        <strain>KangWon16</strain>
    </source>
</reference>
<feature type="chain" id="PRO_0000342353" description="Photosystem II reaction center protein Psb30">
    <location>
        <begin position="1"/>
        <end position="33"/>
    </location>
</feature>
<feature type="transmembrane region" description="Helical" evidence="1">
    <location>
        <begin position="5"/>
        <end position="25"/>
    </location>
</feature>
<gene>
    <name evidence="1" type="primary">psb30</name>
    <name evidence="1" type="synonym">ycf12</name>
</gene>
<evidence type="ECO:0000255" key="1">
    <source>
        <dbReference type="HAMAP-Rule" id="MF_01329"/>
    </source>
</evidence>
<comment type="function">
    <text evidence="1">A core subunit of photosystem II (PSII), probably helps stabilize the reaction center.</text>
</comment>
<comment type="subunit">
    <text evidence="1">PSII is composed of 1 copy each of membrane proteins PsbA, PsbB, PsbC, PsbD, PsbE, PsbF, PsbH, PsbI, PsbJ, PsbK, PsbL, PsbM, PsbT, PsbX, PsbY, PsbZ, Psb30/Ycf12, peripheral proteins of the oxygen-evolving complex and a large number of cofactors. It forms dimeric complexes.</text>
</comment>
<comment type="subcellular location">
    <subcellularLocation>
        <location evidence="1">Plastid</location>
        <location evidence="1">Chloroplast thylakoid membrane</location>
        <topology evidence="1">Single-pass membrane protein</topology>
    </subcellularLocation>
</comment>
<comment type="similarity">
    <text evidence="1">Belongs to the Psb30/Ycf12 family.</text>
</comment>
<name>PSB30_PINKO</name>
<protein>
    <recommendedName>
        <fullName evidence="1">Photosystem II reaction center protein Psb30</fullName>
    </recommendedName>
    <alternativeName>
        <fullName evidence="1">Photosystem II reaction center protein Ycf12</fullName>
    </alternativeName>
</protein>